<protein>
    <recommendedName>
        <fullName evidence="1">Ribosomal RNA small subunit methyltransferase J</fullName>
        <ecNumber evidence="1">2.1.1.242</ecNumber>
    </recommendedName>
    <alternativeName>
        <fullName evidence="1">16S rRNA m2G1516 methyltransferase</fullName>
    </alternativeName>
    <alternativeName>
        <fullName evidence="1">rRNA (guanine-N(2)-)-methyltransferase</fullName>
    </alternativeName>
</protein>
<evidence type="ECO:0000255" key="1">
    <source>
        <dbReference type="HAMAP-Rule" id="MF_01523"/>
    </source>
</evidence>
<name>RSMJ_VIBPA</name>
<comment type="function">
    <text evidence="1">Specifically methylates the guanosine in position 1516 of 16S rRNA.</text>
</comment>
<comment type="catalytic activity">
    <reaction evidence="1">
        <text>guanosine(1516) in 16S rRNA + S-adenosyl-L-methionine = N(2)-methylguanosine(1516) in 16S rRNA + S-adenosyl-L-homocysteine + H(+)</text>
        <dbReference type="Rhea" id="RHEA:43220"/>
        <dbReference type="Rhea" id="RHEA-COMP:10412"/>
        <dbReference type="Rhea" id="RHEA-COMP:10413"/>
        <dbReference type="ChEBI" id="CHEBI:15378"/>
        <dbReference type="ChEBI" id="CHEBI:57856"/>
        <dbReference type="ChEBI" id="CHEBI:59789"/>
        <dbReference type="ChEBI" id="CHEBI:74269"/>
        <dbReference type="ChEBI" id="CHEBI:74481"/>
        <dbReference type="EC" id="2.1.1.242"/>
    </reaction>
</comment>
<comment type="subcellular location">
    <subcellularLocation>
        <location evidence="1">Cytoplasm</location>
    </subcellularLocation>
</comment>
<comment type="similarity">
    <text evidence="1">Belongs to the methyltransferase superfamily. RsmJ family.</text>
</comment>
<gene>
    <name evidence="1" type="primary">rsmJ</name>
    <name type="ordered locus">VP0073</name>
</gene>
<reference key="1">
    <citation type="journal article" date="2003" name="Lancet">
        <title>Genome sequence of Vibrio parahaemolyticus: a pathogenic mechanism distinct from that of V. cholerae.</title>
        <authorList>
            <person name="Makino K."/>
            <person name="Oshima K."/>
            <person name="Kurokawa K."/>
            <person name="Yokoyama K."/>
            <person name="Uda T."/>
            <person name="Tagomori K."/>
            <person name="Iijima Y."/>
            <person name="Najima M."/>
            <person name="Nakano M."/>
            <person name="Yamashita A."/>
            <person name="Kubota Y."/>
            <person name="Kimura S."/>
            <person name="Yasunaga T."/>
            <person name="Honda T."/>
            <person name="Shinagawa H."/>
            <person name="Hattori M."/>
            <person name="Iida T."/>
        </authorList>
    </citation>
    <scope>NUCLEOTIDE SEQUENCE [LARGE SCALE GENOMIC DNA]</scope>
    <source>
        <strain>RIMD 2210633</strain>
    </source>
</reference>
<feature type="chain" id="PRO_0000212096" description="Ribosomal RNA small subunit methyltransferase J">
    <location>
        <begin position="1"/>
        <end position="259"/>
    </location>
</feature>
<feature type="binding site" evidence="1">
    <location>
        <begin position="101"/>
        <end position="102"/>
    </location>
    <ligand>
        <name>S-adenosyl-L-methionine</name>
        <dbReference type="ChEBI" id="CHEBI:59789"/>
    </ligand>
</feature>
<feature type="binding site" evidence="1">
    <location>
        <begin position="117"/>
        <end position="118"/>
    </location>
    <ligand>
        <name>S-adenosyl-L-methionine</name>
        <dbReference type="ChEBI" id="CHEBI:59789"/>
    </ligand>
</feature>
<feature type="binding site" evidence="1">
    <location>
        <begin position="153"/>
        <end position="154"/>
    </location>
    <ligand>
        <name>S-adenosyl-L-methionine</name>
        <dbReference type="ChEBI" id="CHEBI:59789"/>
    </ligand>
</feature>
<feature type="binding site" evidence="1">
    <location>
        <position position="176"/>
    </location>
    <ligand>
        <name>S-adenosyl-L-methionine</name>
        <dbReference type="ChEBI" id="CHEBI:59789"/>
    </ligand>
</feature>
<keyword id="KW-0963">Cytoplasm</keyword>
<keyword id="KW-0489">Methyltransferase</keyword>
<keyword id="KW-0698">rRNA processing</keyword>
<keyword id="KW-0949">S-adenosyl-L-methionine</keyword>
<keyword id="KW-0808">Transferase</keyword>
<dbReference type="EC" id="2.1.1.242" evidence="1"/>
<dbReference type="EMBL" id="BA000031">
    <property type="protein sequence ID" value="BAC58336.1"/>
    <property type="molecule type" value="Genomic_DNA"/>
</dbReference>
<dbReference type="RefSeq" id="NP_796452.1">
    <property type="nucleotide sequence ID" value="NC_004603.1"/>
</dbReference>
<dbReference type="RefSeq" id="WP_005478714.1">
    <property type="nucleotide sequence ID" value="NC_004603.1"/>
</dbReference>
<dbReference type="SMR" id="Q87TJ6"/>
<dbReference type="GeneID" id="1187540"/>
<dbReference type="KEGG" id="vpa:VP0073"/>
<dbReference type="PATRIC" id="fig|223926.6.peg.69"/>
<dbReference type="eggNOG" id="COG0742">
    <property type="taxonomic scope" value="Bacteria"/>
</dbReference>
<dbReference type="HOGENOM" id="CLU_076324_0_0_6"/>
<dbReference type="Proteomes" id="UP000002493">
    <property type="component" value="Chromosome 1"/>
</dbReference>
<dbReference type="GO" id="GO:0005737">
    <property type="term" value="C:cytoplasm"/>
    <property type="evidence" value="ECO:0007669"/>
    <property type="project" value="UniProtKB-SubCell"/>
</dbReference>
<dbReference type="GO" id="GO:0008990">
    <property type="term" value="F:rRNA (guanine-N2-)-methyltransferase activity"/>
    <property type="evidence" value="ECO:0007669"/>
    <property type="project" value="UniProtKB-UniRule"/>
</dbReference>
<dbReference type="CDD" id="cd02440">
    <property type="entry name" value="AdoMet_MTases"/>
    <property type="match status" value="1"/>
</dbReference>
<dbReference type="Gene3D" id="3.40.50.150">
    <property type="entry name" value="Vaccinia Virus protein VP39"/>
    <property type="match status" value="1"/>
</dbReference>
<dbReference type="Gene3D" id="3.40.1630.10">
    <property type="entry name" value="YhiQ-like domain"/>
    <property type="match status" value="1"/>
</dbReference>
<dbReference type="HAMAP" id="MF_01523">
    <property type="entry name" value="16SrRNA_methyltr_J"/>
    <property type="match status" value="1"/>
</dbReference>
<dbReference type="InterPro" id="IPR007536">
    <property type="entry name" value="16SrRNA_methylTrfase_J"/>
</dbReference>
<dbReference type="InterPro" id="IPR029063">
    <property type="entry name" value="SAM-dependent_MTases_sf"/>
</dbReference>
<dbReference type="PANTHER" id="PTHR36112">
    <property type="entry name" value="RIBOSOMAL RNA SMALL SUBUNIT METHYLTRANSFERASE J"/>
    <property type="match status" value="1"/>
</dbReference>
<dbReference type="PANTHER" id="PTHR36112:SF1">
    <property type="entry name" value="RIBOSOMAL RNA SMALL SUBUNIT METHYLTRANSFERASE J"/>
    <property type="match status" value="1"/>
</dbReference>
<dbReference type="Pfam" id="PF04445">
    <property type="entry name" value="SAM_MT"/>
    <property type="match status" value="1"/>
</dbReference>
<dbReference type="SUPFAM" id="SSF53335">
    <property type="entry name" value="S-adenosyl-L-methionine-dependent methyltransferases"/>
    <property type="match status" value="1"/>
</dbReference>
<accession>Q87TJ6</accession>
<organism>
    <name type="scientific">Vibrio parahaemolyticus serotype O3:K6 (strain RIMD 2210633)</name>
    <dbReference type="NCBI Taxonomy" id="223926"/>
    <lineage>
        <taxon>Bacteria</taxon>
        <taxon>Pseudomonadati</taxon>
        <taxon>Pseudomonadota</taxon>
        <taxon>Gammaproteobacteria</taxon>
        <taxon>Vibrionales</taxon>
        <taxon>Vibrionaceae</taxon>
        <taxon>Vibrio</taxon>
    </lineage>
</organism>
<sequence length="259" mass="28374">MQLQLICEDPSQQSHLDELAARWQLSHTDESDFALVLTAERLELRKVDEPKLGAIFVDLIGGAVGHRRKFGGGKGQAIAKAAGLNKGATPTVLDGTAGLGRDAFVLASLGCKVQMVERHPVVAALLDDGLARAKQDPEIGTWVSERMSLIHASSHDALDQLAQDREFVKPDVVYLDPMYPHPENKKKSALVKKEMRVFQSLVGADLDADGLLEPALALATKRVVVKRPDYANWLNEQKPSMAIETKKNRFDVYVKASMA</sequence>
<proteinExistence type="inferred from homology"/>